<dbReference type="EC" id="3.1.3.16" evidence="5"/>
<dbReference type="SMR" id="P55739"/>
<dbReference type="STRING" id="9986.ENSOCUP00000018147"/>
<dbReference type="PaxDb" id="9986-ENSOCUP00000018147"/>
<dbReference type="eggNOG" id="KOG0376">
    <property type="taxonomic scope" value="Eukaryota"/>
</dbReference>
<dbReference type="InParanoid" id="P55739"/>
<dbReference type="Proteomes" id="UP000001811">
    <property type="component" value="Unplaced"/>
</dbReference>
<dbReference type="GO" id="GO:0005737">
    <property type="term" value="C:cytoplasm"/>
    <property type="evidence" value="ECO:0007669"/>
    <property type="project" value="UniProtKB-SubCell"/>
</dbReference>
<dbReference type="GO" id="GO:0005634">
    <property type="term" value="C:nucleus"/>
    <property type="evidence" value="ECO:0007669"/>
    <property type="project" value="UniProtKB-SubCell"/>
</dbReference>
<dbReference type="GO" id="GO:0005886">
    <property type="term" value="C:plasma membrane"/>
    <property type="evidence" value="ECO:0007669"/>
    <property type="project" value="UniProtKB-SubCell"/>
</dbReference>
<dbReference type="GO" id="GO:0046872">
    <property type="term" value="F:metal ion binding"/>
    <property type="evidence" value="ECO:0007669"/>
    <property type="project" value="UniProtKB-KW"/>
</dbReference>
<dbReference type="GO" id="GO:0004722">
    <property type="term" value="F:protein serine/threonine phosphatase activity"/>
    <property type="evidence" value="ECO:0000250"/>
    <property type="project" value="UniProtKB"/>
</dbReference>
<dbReference type="GO" id="GO:0070262">
    <property type="term" value="P:peptidyl-serine dephosphorylation"/>
    <property type="evidence" value="ECO:0000250"/>
    <property type="project" value="UniProtKB"/>
</dbReference>
<dbReference type="Gene3D" id="3.60.21.10">
    <property type="match status" value="1"/>
</dbReference>
<dbReference type="InterPro" id="IPR029052">
    <property type="entry name" value="Metallo-depent_PP-like"/>
</dbReference>
<gene>
    <name type="primary">PPP5C</name>
    <name type="synonym">PPP5</name>
</gene>
<organism>
    <name type="scientific">Oryctolagus cuniculus</name>
    <name type="common">Rabbit</name>
    <dbReference type="NCBI Taxonomy" id="9986"/>
    <lineage>
        <taxon>Eukaryota</taxon>
        <taxon>Metazoa</taxon>
        <taxon>Chordata</taxon>
        <taxon>Craniata</taxon>
        <taxon>Vertebrata</taxon>
        <taxon>Euteleostomi</taxon>
        <taxon>Mammalia</taxon>
        <taxon>Eutheria</taxon>
        <taxon>Euarchontoglires</taxon>
        <taxon>Glires</taxon>
        <taxon>Lagomorpha</taxon>
        <taxon>Leporidae</taxon>
        <taxon>Oryctolagus</taxon>
    </lineage>
</organism>
<comment type="function">
    <text evidence="2 3 4 5">Serine/threonine-protein phosphatase that dephosphorylates a myriad of proteins involved in different signaling pathways including the kinases CSNK1E, ASK1/MAP3K5, PRKDC and RAF1, the nuclear receptors NR3C1, PPARG, ESR1 and ESR2, SMAD proteins and TAU/MAPT (PubMed:9000529). Implicated in wide ranging cellular processes, including apoptosis, differentiation, DNA damage response, cell survival, regulation of ion channels or circadian rhythms, in response to steroid and thyroid hormones, calcium, fatty acids, TGF-beta as well as oxidative and genotoxic stresses. Participates in the control of DNA damage response mechanisms such as checkpoint activation and DNA damage repair through, for instance, the regulation ATM/ATR-signaling and dephosphorylation of PRKDC and TP53BP1. Inhibits ASK1/MAP3K5-mediated apoptosis induced by oxidative stress (By similarity). Plays a positive role in adipogenesis, mainly through the dephosphorylation and activation of PPARG transactivation function. Also dephosphorylates and inhibits the anti-adipogenic effect of NR3C1 (By similarity). Regulates the circadian rhythms, through the dephosphorylation and activation of CSNK1E. May modulate TGF-beta signaling pathway by the regulation of SMAD3 phosphorylation and protein expression levels. Dephosphorylates and may play a role in the regulation of TAU/MAPT (By similarity). Through their dephosphorylation, may play a role in the regulation of ions channels such as KCNH2 (By similarity). Dephosphorylate FNIP1, disrupting interaction with HSP90AA1/Hsp90 (By similarity).</text>
</comment>
<comment type="catalytic activity">
    <reaction evidence="5">
        <text>O-phospho-L-seryl-[protein] + H2O = L-seryl-[protein] + phosphate</text>
        <dbReference type="Rhea" id="RHEA:20629"/>
        <dbReference type="Rhea" id="RHEA-COMP:9863"/>
        <dbReference type="Rhea" id="RHEA-COMP:11604"/>
        <dbReference type="ChEBI" id="CHEBI:15377"/>
        <dbReference type="ChEBI" id="CHEBI:29999"/>
        <dbReference type="ChEBI" id="CHEBI:43474"/>
        <dbReference type="ChEBI" id="CHEBI:83421"/>
        <dbReference type="EC" id="3.1.3.16"/>
    </reaction>
    <physiologicalReaction direction="left-to-right" evidence="5">
        <dbReference type="Rhea" id="RHEA:20630"/>
    </physiologicalReaction>
</comment>
<comment type="catalytic activity">
    <reaction evidence="5">
        <text>O-phospho-L-threonyl-[protein] + H2O = L-threonyl-[protein] + phosphate</text>
        <dbReference type="Rhea" id="RHEA:47004"/>
        <dbReference type="Rhea" id="RHEA-COMP:11060"/>
        <dbReference type="Rhea" id="RHEA-COMP:11605"/>
        <dbReference type="ChEBI" id="CHEBI:15377"/>
        <dbReference type="ChEBI" id="CHEBI:30013"/>
        <dbReference type="ChEBI" id="CHEBI:43474"/>
        <dbReference type="ChEBI" id="CHEBI:61977"/>
        <dbReference type="EC" id="3.1.3.16"/>
    </reaction>
    <physiologicalReaction direction="left-to-right" evidence="5">
        <dbReference type="Rhea" id="RHEA:47005"/>
    </physiologicalReaction>
</comment>
<comment type="cofactor">
    <cofactor evidence="1">
        <name>Mg(2+)</name>
        <dbReference type="ChEBI" id="CHEBI:18420"/>
    </cofactor>
    <cofactor evidence="1">
        <name>Mn(2+)</name>
        <dbReference type="ChEBI" id="CHEBI:29035"/>
    </cofactor>
    <text evidence="1">Binds 2 magnesium or manganese ions per subunit.</text>
</comment>
<comment type="activity regulation">
    <text evidence="5">Autoinhibited. In the autoinhibited state, the TPR domain interacts with the catalytic region and prevents substrate access to the catalytic pocket. Allosterically activated by various polyunsaturated fatty acids, free long-chain fatty-acids and long-chain fatty acyl-CoA esters, arachidonic acid being the most effective activator. HSP90A and probably RAC1, GNA12 and GNA13 can also release the autoinhibition by the TPR repeat. Activation by RAC1, GNA12 and GNA13 is synergistic with the one produced by fatty acids binding. Inhibited by okadaic acid.</text>
</comment>
<comment type="subunit">
    <text evidence="2 4 6">Probably forms a complex composed of chaperones HSP90 and HSP70, co-chaperones STIP1/HOP, CDC37, PPP5C, PTGES3/p23, TSC1 and client protein TSC2 (By similarity). Probably forms a complex composed of chaperones HSP90 and HSP70, co-chaperones CDC37, PPP5C, TSC1 and client protein TSC2, CDK4, AKT, RAF1 and NR3C1; this complex does not contain co-chaperones STIP1/HOP and PTGES3/p23 (By similarity). Part of a complex with HSP90/HSP90AA1 and steroid receptors (PubMed:9195923). Interacts (via TPR repeats) with HSP90AA1 (via TPR repeat-binding motif) or HSPA1A/HSPA1B; the interaction is direct and activates the phosphatase activity (By similarity). Dissociates from HSPA1A/HSPA1B and HSP90AA1 in response to arachidonic acid (By similarity). Interacts with CPNE1 (via VWFA domain) (By similarity). Interacts with CDC16, CDC27 (By similarity). Interacts with KLHDC10 (via the 6 Kelch repeats); inhibits the phosphatase activity on MAP3K5 (By similarity). Interacts with ATM and ATR; both interactions are induced by DNA damage and enhance ATM and ATR kinase activity (By similarity). Interacts with RAD17; reduced by DNA damage. Interacts with nuclear receptors such as NR3C1/GCR and PPARG (activated by agonist); regulates their transactivation activities (By similarity). Interacts (via TPR repeats) with S100 proteins S100A1, S100A2, S100A6, S100B and S100P; the interactions are calcium-dependent, strongly activate PPP5C phosphatase activity and compete with HSP90AA1 and MAP3K5 interactions (By similarity). Interacts with SMAD2 and SMAD3 but not with SMAD1; decreases SMAD3 phosphorylation and protein levels (By similarity). Interacts (via TPR repeats) with CRY1 and CRY2; the interaction with CRY2 down-regulates the phosphatase activity on CSNK1E (By similarity). Interacts (via TPR repeats) with the active form of RAC1, GNA12 or GNA13; these interactions activate the phosphatase activity and translocate PPP5C to the cell membrane (By similarity). Interacts with FLCN (By similarity).</text>
</comment>
<comment type="subcellular location">
    <subcellularLocation>
        <location evidence="2">Nucleus</location>
    </subcellularLocation>
    <subcellularLocation>
        <location evidence="2">Cytoplasm</location>
    </subcellularLocation>
    <subcellularLocation>
        <location evidence="2">Cell membrane</location>
    </subcellularLocation>
    <text evidence="2">Predominantly nuclear. But also present in the cytoplasm. Translocates from the cytoplasm to the plasma membrane in a RAC1-dependent manner.</text>
</comment>
<comment type="PTM">
    <text evidence="5">Activated by at least two different proteolytic cleavages producing a 56 kDa and a 50 kDa form.</text>
</comment>
<comment type="similarity">
    <text evidence="7">Belongs to the PPP phosphatase family. PP-5 (PP-T) subfamily.</text>
</comment>
<keyword id="KW-1003">Cell membrane</keyword>
<keyword id="KW-0963">Cytoplasm</keyword>
<keyword id="KW-0378">Hydrolase</keyword>
<keyword id="KW-0460">Magnesium</keyword>
<keyword id="KW-0464">Manganese</keyword>
<keyword id="KW-0472">Membrane</keyword>
<keyword id="KW-0479">Metal-binding</keyword>
<keyword id="KW-0539">Nucleus</keyword>
<keyword id="KW-0904">Protein phosphatase</keyword>
<keyword id="KW-1185">Reference proteome</keyword>
<proteinExistence type="evidence at protein level"/>
<protein>
    <recommendedName>
        <fullName>Serine/threonine-protein phosphatase 5</fullName>
        <shortName>PP5</shortName>
        <ecNumber evidence="5">3.1.3.16</ecNumber>
    </recommendedName>
    <alternativeName>
        <fullName>Protein phosphatase T</fullName>
        <shortName>PPT</shortName>
    </alternativeName>
</protein>
<sequence>KASYIHLRGSDLRPQFHQFTAVPHPNVKPMAYANALLQLGVM</sequence>
<accession>P55739</accession>
<reference key="1">
    <citation type="journal article" date="1994" name="EMBO J.">
        <title>A novel human protein serine/threonine phosphatase, which possesses four tetratricopeptide repeat motifs and localizes to the nucleus.</title>
        <authorList>
            <person name="Chen M.X."/>
            <person name="McPartlin A.E."/>
            <person name="Brown L."/>
            <person name="Chen Y.H."/>
            <person name="Barker H.M."/>
            <person name="Cohen P.T.W."/>
        </authorList>
    </citation>
    <scope>NUCLEOTIDE SEQUENCE</scope>
    <source>
        <tissue>Liver</tissue>
    </source>
</reference>
<reference key="2">
    <citation type="journal article" date="1997" name="FEBS Lett.">
        <title>Activation of protein phosphatase 5 by limited proteolysis or the binding of polyunsaturated fatty acids to the TPR domain.</title>
        <authorList>
            <person name="Chen M.X."/>
            <person name="Cohen P.T."/>
        </authorList>
    </citation>
    <scope>FUNCTION</scope>
    <scope>CATALYTIC ACTIVITY</scope>
    <scope>ACTIVITY REGULATION</scope>
    <scope>LIPID-BINDING</scope>
    <scope>CLEAVAGE</scope>
</reference>
<reference key="3">
    <citation type="journal article" date="1997" name="J. Biol. Chem.">
        <title>Protein phosphatase 5 is a major component of glucocorticoid receptor.hsp90 complexes with properties of an FK506-binding immunophilin.</title>
        <authorList>
            <person name="Silverstein A.M."/>
            <person name="Galigniana M.D."/>
            <person name="Chen M.S."/>
            <person name="Owens-Grillo J.K."/>
            <person name="Chinkers M."/>
            <person name="Pratt W.B."/>
        </authorList>
    </citation>
    <scope>IDENTIFICATION IN A COMPLEX WITH HSP90AA1 AND NR3C1</scope>
</reference>
<feature type="chain" id="PRO_0000058896" description="Serine/threonine-protein phosphatase 5">
    <location>
        <begin position="1" status="less than"/>
        <end position="42"/>
    </location>
</feature>
<feature type="region of interest" description="Required for autoinhibition" evidence="1">
    <location>
        <begin position="38"/>
        <end position="42"/>
    </location>
</feature>
<feature type="non-terminal residue">
    <location>
        <position position="1"/>
    </location>
</feature>
<name>PPP5_RABIT</name>
<evidence type="ECO:0000250" key="1"/>
<evidence type="ECO:0000250" key="2">
    <source>
        <dbReference type="UniProtKB" id="P53041"/>
    </source>
</evidence>
<evidence type="ECO:0000250" key="3">
    <source>
        <dbReference type="UniProtKB" id="P53042"/>
    </source>
</evidence>
<evidence type="ECO:0000250" key="4">
    <source>
        <dbReference type="UniProtKB" id="Q60676"/>
    </source>
</evidence>
<evidence type="ECO:0000269" key="5">
    <source>
    </source>
</evidence>
<evidence type="ECO:0000269" key="6">
    <source>
    </source>
</evidence>
<evidence type="ECO:0000305" key="7"/>